<feature type="chain" id="PRO_0000193783" description="AP-3 complex subunit mu-1">
    <location>
        <begin position="1"/>
        <end position="418"/>
    </location>
</feature>
<feature type="domain" description="MHD" evidence="2">
    <location>
        <begin position="176"/>
        <end position="417"/>
    </location>
</feature>
<feature type="strand" evidence="4">
    <location>
        <begin position="178"/>
        <end position="191"/>
    </location>
</feature>
<feature type="strand" evidence="4">
    <location>
        <begin position="197"/>
        <end position="211"/>
    </location>
</feature>
<feature type="strand" evidence="4">
    <location>
        <begin position="217"/>
        <end position="223"/>
    </location>
</feature>
<feature type="helix" evidence="4">
    <location>
        <begin position="225"/>
        <end position="227"/>
    </location>
</feature>
<feature type="strand" evidence="4">
    <location>
        <begin position="228"/>
        <end position="233"/>
    </location>
</feature>
<feature type="helix" evidence="4">
    <location>
        <begin position="239"/>
        <end position="245"/>
    </location>
</feature>
<feature type="strand" evidence="4">
    <location>
        <begin position="246"/>
        <end position="250"/>
    </location>
</feature>
<feature type="strand" evidence="4">
    <location>
        <begin position="254"/>
        <end position="264"/>
    </location>
</feature>
<feature type="strand" evidence="4">
    <location>
        <begin position="274"/>
        <end position="281"/>
    </location>
</feature>
<feature type="strand" evidence="4">
    <location>
        <begin position="288"/>
        <end position="300"/>
    </location>
</feature>
<feature type="strand" evidence="4">
    <location>
        <begin position="305"/>
        <end position="313"/>
    </location>
</feature>
<feature type="strand" evidence="4">
    <location>
        <begin position="318"/>
        <end position="332"/>
    </location>
</feature>
<feature type="turn" evidence="4">
    <location>
        <begin position="334"/>
        <end position="336"/>
    </location>
</feature>
<feature type="strand" evidence="4">
    <location>
        <begin position="338"/>
        <end position="344"/>
    </location>
</feature>
<feature type="strand" evidence="4">
    <location>
        <begin position="348"/>
        <end position="350"/>
    </location>
</feature>
<feature type="strand" evidence="4">
    <location>
        <begin position="353"/>
        <end position="360"/>
    </location>
</feature>
<feature type="strand" evidence="4">
    <location>
        <begin position="373"/>
        <end position="380"/>
    </location>
</feature>
<feature type="strand" evidence="4">
    <location>
        <begin position="389"/>
        <end position="396"/>
    </location>
</feature>
<feature type="strand" evidence="4">
    <location>
        <begin position="402"/>
        <end position="416"/>
    </location>
</feature>
<dbReference type="EMBL" id="L07073">
    <property type="protein sequence ID" value="AAA57231.1"/>
    <property type="molecule type" value="mRNA"/>
</dbReference>
<dbReference type="PIR" id="I84763">
    <property type="entry name" value="I84763"/>
</dbReference>
<dbReference type="PDB" id="4IKN">
    <property type="method" value="X-ray"/>
    <property type="resolution" value="1.85 A"/>
    <property type="chains" value="A=165-418"/>
</dbReference>
<dbReference type="PDBsum" id="4IKN"/>
<dbReference type="SMR" id="P53676"/>
<dbReference type="FunCoup" id="P53676">
    <property type="interactions" value="3946"/>
</dbReference>
<dbReference type="IntAct" id="P53676">
    <property type="interactions" value="10"/>
</dbReference>
<dbReference type="MINT" id="P53676"/>
<dbReference type="STRING" id="10116.ENSRNOP00000016387"/>
<dbReference type="PhosphoSitePlus" id="P53676"/>
<dbReference type="jPOST" id="P53676"/>
<dbReference type="PaxDb" id="10116-ENSRNOP00000016387"/>
<dbReference type="UCSC" id="RGD:620417">
    <property type="organism name" value="rat"/>
</dbReference>
<dbReference type="AGR" id="RGD:620417"/>
<dbReference type="RGD" id="620417">
    <property type="gene designation" value="Ap3m1"/>
</dbReference>
<dbReference type="eggNOG" id="KOG2740">
    <property type="taxonomic scope" value="Eukaryota"/>
</dbReference>
<dbReference type="InParanoid" id="P53676"/>
<dbReference type="PhylomeDB" id="P53676"/>
<dbReference type="EvolutionaryTrace" id="P53676"/>
<dbReference type="PRO" id="PR:P53676"/>
<dbReference type="Proteomes" id="UP000002494">
    <property type="component" value="Unplaced"/>
</dbReference>
<dbReference type="GO" id="GO:1904115">
    <property type="term" value="C:axon cytoplasm"/>
    <property type="evidence" value="ECO:0007669"/>
    <property type="project" value="GOC"/>
</dbReference>
<dbReference type="GO" id="GO:0030131">
    <property type="term" value="C:clathrin adaptor complex"/>
    <property type="evidence" value="ECO:0007669"/>
    <property type="project" value="InterPro"/>
</dbReference>
<dbReference type="GO" id="GO:0031410">
    <property type="term" value="C:cytoplasmic vesicle"/>
    <property type="evidence" value="ECO:0000318"/>
    <property type="project" value="GO_Central"/>
</dbReference>
<dbReference type="GO" id="GO:0030659">
    <property type="term" value="C:cytoplasmic vesicle membrane"/>
    <property type="evidence" value="ECO:0007669"/>
    <property type="project" value="UniProtKB-SubCell"/>
</dbReference>
<dbReference type="GO" id="GO:0005794">
    <property type="term" value="C:Golgi apparatus"/>
    <property type="evidence" value="ECO:0007669"/>
    <property type="project" value="UniProtKB-SubCell"/>
</dbReference>
<dbReference type="GO" id="GO:0098837">
    <property type="term" value="C:postsynaptic recycling endosome"/>
    <property type="evidence" value="ECO:0000266"/>
    <property type="project" value="RGD"/>
</dbReference>
<dbReference type="GO" id="GO:0031267">
    <property type="term" value="F:small GTPase binding"/>
    <property type="evidence" value="ECO:0000266"/>
    <property type="project" value="RGD"/>
</dbReference>
<dbReference type="GO" id="GO:0008089">
    <property type="term" value="P:anterograde axonal transport"/>
    <property type="evidence" value="ECO:0000250"/>
    <property type="project" value="UniProtKB"/>
</dbReference>
<dbReference type="GO" id="GO:0048490">
    <property type="term" value="P:anterograde synaptic vesicle transport"/>
    <property type="evidence" value="ECO:0000250"/>
    <property type="project" value="UniProtKB"/>
</dbReference>
<dbReference type="GO" id="GO:0006897">
    <property type="term" value="P:endocytosis"/>
    <property type="evidence" value="ECO:0000318"/>
    <property type="project" value="GO_Central"/>
</dbReference>
<dbReference type="GO" id="GO:0006886">
    <property type="term" value="P:intracellular protein transport"/>
    <property type="evidence" value="ECO:0007669"/>
    <property type="project" value="InterPro"/>
</dbReference>
<dbReference type="GO" id="GO:0098884">
    <property type="term" value="P:postsynaptic neurotransmitter receptor internalization"/>
    <property type="evidence" value="ECO:0000266"/>
    <property type="project" value="RGD"/>
</dbReference>
<dbReference type="CDD" id="cd09260">
    <property type="entry name" value="AP-3_Mu3A_Cterm"/>
    <property type="match status" value="1"/>
</dbReference>
<dbReference type="CDD" id="cd14837">
    <property type="entry name" value="AP3_Mu_N"/>
    <property type="match status" value="1"/>
</dbReference>
<dbReference type="FunFam" id="3.30.450.60:FF:000012">
    <property type="entry name" value="AP-3 complex subunit mu-1 isoform X1"/>
    <property type="match status" value="1"/>
</dbReference>
<dbReference type="FunFam" id="2.60.40.1170:FF:000006">
    <property type="entry name" value="Putative AP-3 complex subunit mu-2-like"/>
    <property type="match status" value="1"/>
</dbReference>
<dbReference type="Gene3D" id="3.30.450.60">
    <property type="match status" value="1"/>
</dbReference>
<dbReference type="Gene3D" id="2.60.40.1170">
    <property type="entry name" value="Mu homology domain, subdomain B"/>
    <property type="match status" value="2"/>
</dbReference>
<dbReference type="InterPro" id="IPR050431">
    <property type="entry name" value="Adaptor_comp_med_subunit"/>
</dbReference>
<dbReference type="InterPro" id="IPR036168">
    <property type="entry name" value="AP2_Mu_C_sf"/>
</dbReference>
<dbReference type="InterPro" id="IPR022775">
    <property type="entry name" value="AP_mu_sigma_su"/>
</dbReference>
<dbReference type="InterPro" id="IPR001392">
    <property type="entry name" value="Clathrin_mu"/>
</dbReference>
<dbReference type="InterPro" id="IPR018240">
    <property type="entry name" value="Clathrin_mu_CS"/>
</dbReference>
<dbReference type="InterPro" id="IPR011012">
    <property type="entry name" value="Longin-like_dom_sf"/>
</dbReference>
<dbReference type="InterPro" id="IPR028565">
    <property type="entry name" value="MHD"/>
</dbReference>
<dbReference type="PANTHER" id="PTHR10529">
    <property type="entry name" value="AP COMPLEX SUBUNIT MU"/>
    <property type="match status" value="1"/>
</dbReference>
<dbReference type="Pfam" id="PF00928">
    <property type="entry name" value="Adap_comp_sub"/>
    <property type="match status" value="1"/>
</dbReference>
<dbReference type="Pfam" id="PF01217">
    <property type="entry name" value="Clat_adaptor_s"/>
    <property type="match status" value="1"/>
</dbReference>
<dbReference type="PIRSF" id="PIRSF005992">
    <property type="entry name" value="Clathrin_mu"/>
    <property type="match status" value="1"/>
</dbReference>
<dbReference type="PRINTS" id="PR00314">
    <property type="entry name" value="CLATHRINADPT"/>
</dbReference>
<dbReference type="SUPFAM" id="SSF49447">
    <property type="entry name" value="Second domain of Mu2 adaptin subunit (ap50) of ap2 adaptor"/>
    <property type="match status" value="1"/>
</dbReference>
<dbReference type="SUPFAM" id="SSF64356">
    <property type="entry name" value="SNARE-like"/>
    <property type="match status" value="1"/>
</dbReference>
<dbReference type="PROSITE" id="PS00990">
    <property type="entry name" value="CLAT_ADAPTOR_M_1"/>
    <property type="match status" value="1"/>
</dbReference>
<dbReference type="PROSITE" id="PS00991">
    <property type="entry name" value="CLAT_ADAPTOR_M_2"/>
    <property type="match status" value="1"/>
</dbReference>
<dbReference type="PROSITE" id="PS51072">
    <property type="entry name" value="MHD"/>
    <property type="match status" value="1"/>
</dbReference>
<evidence type="ECO:0000250" key="1"/>
<evidence type="ECO:0000255" key="2">
    <source>
        <dbReference type="PROSITE-ProRule" id="PRU00404"/>
    </source>
</evidence>
<evidence type="ECO:0000305" key="3"/>
<evidence type="ECO:0007829" key="4">
    <source>
        <dbReference type="PDB" id="4IKN"/>
    </source>
</evidence>
<keyword id="KW-0002">3D-structure</keyword>
<keyword id="KW-0968">Cytoplasmic vesicle</keyword>
<keyword id="KW-0333">Golgi apparatus</keyword>
<keyword id="KW-0472">Membrane</keyword>
<keyword id="KW-0653">Protein transport</keyword>
<keyword id="KW-1185">Reference proteome</keyword>
<keyword id="KW-0813">Transport</keyword>
<protein>
    <recommendedName>
        <fullName>AP-3 complex subunit mu-1</fullName>
    </recommendedName>
    <alternativeName>
        <fullName>AP-3 adaptor complex mu3A subunit</fullName>
    </alternativeName>
    <alternativeName>
        <fullName>Adaptor-related protein complex 3 subunit mu-1</fullName>
    </alternativeName>
    <alternativeName>
        <fullName>Clathrin assembly protein assembly protein complex 3 mu-1 medium chain</fullName>
    </alternativeName>
    <alternativeName>
        <fullName>Clathrin coat assembly protein AP47 homolog 1</fullName>
    </alternativeName>
    <alternativeName>
        <fullName>Clathrin coat-associated protein AP47 homolog 1</fullName>
    </alternativeName>
    <alternativeName>
        <fullName>Golgi adaptor AP-1 47 kDa protein homolog 1</fullName>
    </alternativeName>
    <alternativeName>
        <fullName>HA1 47 kDa subunit homolog 1</fullName>
    </alternativeName>
    <alternativeName>
        <fullName>Mu-adaptin 3A</fullName>
    </alternativeName>
    <alternativeName>
        <fullName>Mu3A-adaptin</fullName>
    </alternativeName>
    <alternativeName>
        <fullName>P47A</fullName>
    </alternativeName>
</protein>
<organism>
    <name type="scientific">Rattus norvegicus</name>
    <name type="common">Rat</name>
    <dbReference type="NCBI Taxonomy" id="10116"/>
    <lineage>
        <taxon>Eukaryota</taxon>
        <taxon>Metazoa</taxon>
        <taxon>Chordata</taxon>
        <taxon>Craniata</taxon>
        <taxon>Vertebrata</taxon>
        <taxon>Euteleostomi</taxon>
        <taxon>Mammalia</taxon>
        <taxon>Eutheria</taxon>
        <taxon>Euarchontoglires</taxon>
        <taxon>Glires</taxon>
        <taxon>Rodentia</taxon>
        <taxon>Myomorpha</taxon>
        <taxon>Muroidea</taxon>
        <taxon>Muridae</taxon>
        <taxon>Murinae</taxon>
        <taxon>Rattus</taxon>
    </lineage>
</organism>
<accession>P53676</accession>
<gene>
    <name type="primary">Ap3m1</name>
</gene>
<name>AP3M1_RAT</name>
<proteinExistence type="evidence at protein level"/>
<comment type="function">
    <text evidence="1">Part of the AP-3 complex, an adaptor-related complex which is not clathrin-associated. The complex is associated with the Golgi region as well as more peripheral structures. It facilitates the budding of vesicles from the Golgi membrane and may be directly involved in trafficking to lysosomes. In concert with the BLOC-1 complex, AP-3 is required to target cargos into vesicles assembled at cell bodies for delivery into neurites and nerve terminals (By similarity).</text>
</comment>
<comment type="subunit">
    <text evidence="1">Adaptor protein complex 3 (AP-3) is a heterotetramer composed of two large adaptins (delta-type subunit AP3D1 and beta-type subunit AP3B1 or AP3B2), a medium adaptin (mu-type subunit AP3M1 or AP3M2) and a small adaptin (sigma-type subunit APS1 or AP3S2). Interacts with AGAP1. AP-3 associates with the BLOC-1 complex (By similarity).</text>
</comment>
<comment type="subcellular location">
    <subcellularLocation>
        <location>Golgi apparatus</location>
    </subcellularLocation>
    <subcellularLocation>
        <location evidence="1">Cytoplasmic vesicle membrane</location>
        <topology evidence="1">Peripheral membrane protein</topology>
        <orientation evidence="1">Cytoplasmic side</orientation>
    </subcellularLocation>
    <text evidence="1">Component of the coat surrounding the cytoplasmic face of coated vesicles located at the Golgi complex.</text>
</comment>
<comment type="similarity">
    <text evidence="3">Belongs to the adaptor complexes medium subunit family.</text>
</comment>
<sequence>MIHSLFLINCSGDIFLEKHWKSVVSQSVCDYFFEAQEKAADVENVPTVISTPHHYLISIYRDKLFFVSVIQTEVPPLFVIEFLHRVADTFQDYFGECSEAAIKDNVVIVYELLEEMLDNGFPLATESNILKELIKPPTILRSVVNSITGSSNVGDTLPTGQLSNIPWRRAGVKYTNNEAYFDVVEEIDAIIDKSGSTVFAEIQGVIDACIKLSGMPDLSLSFMNPRLLDDVSFHPCIRFKRWESERVLSFIPPDGNFRLISYRVSSQNLVAIPVYVKHNISFKENSSCGRFDITIGPKQNMGKTIEGITVTVHMPKVVLNMNLTPTQGSYTFDPVTKVLAWDVGKITPQKLPSLKGLVNLQSGAPKPEENPNLNIQFKIQQLAISGLKVNRLDMYGEKYKPFKGVKYITKAGKFQVRT</sequence>
<reference key="1">
    <citation type="journal article" date="1994" name="Gene">
        <title>Two rat homologs of clathrin-associated adaptor proteins.</title>
        <authorList>
            <person name="Pevsner J."/>
            <person name="Volknandt W."/>
            <person name="Wong B.R."/>
            <person name="Scheller R.H."/>
        </authorList>
    </citation>
    <scope>NUCLEOTIDE SEQUENCE [MRNA]</scope>
    <source>
        <tissue>Spinal cord</tissue>
    </source>
</reference>